<sequence>MNQILNAQRLIQLSQFHPKLKNIWYLVAAATFSVCNEPQEIPKLYHYAMLLSNDNAHMYRFTLASQTIDLLRSELPMRKTLINENYQQPTFFQKQLTAKFREVILKTGPLAGLPRAINGLTMLKETTPDILVPHLDPIDPWEAAMGNSSPLSETSMRRKHDKTIQERDHTIQNGLRHWNSIYNKVSTRVVNNLNSSYPDLWYYTLVHVYGPLFAFDEILSAQETSLVIIASLVPQDVNPQLRGHLKGALNIGCDKETVEAVRGLAILISQWCGVSWKSGVVKL</sequence>
<name>PXP2_YEAST</name>
<comment type="function">
    <text evidence="2">Probably involved in peroxisome formation or maintenance as well as in amino acid metabolism.</text>
</comment>
<comment type="subcellular location">
    <subcellularLocation>
        <location evidence="2">Peroxisome matrix</location>
    </subcellularLocation>
    <subcellularLocation>
        <location evidence="2">Cytoplasm</location>
        <location evidence="2">Cytosol</location>
    </subcellularLocation>
</comment>
<comment type="domain">
    <text evidence="5">Peroxisomal targeting signal 1 (PTS1) is a tripeptide located at the C-terminus of more than 95% of all peroxisomal matrix proteins. The prototypical PTS1 is the terminal tripeptide SKL (serine-lysine-leucine) but the consensus of PTS1 is defined as [S/A/H/C/E/P/Q/V] [K/R/H/Q] [L/F]. However, this description of the PTS1 consensus must probably be expanded beyond the terminal tripeptide.</text>
</comment>
<comment type="disruption phenotype">
    <text evidence="2">Impairs growth on oleate as well as on the non-fermentable carbon sources ethanol and acetate (PubMed:27392156). Leads to increased level in threonine, serine, valine, isoleucine and histidine; as well as a reduction in citrulline, tyrosine and phenylalanine (PubMed:27392156).</text>
</comment>
<comment type="miscellaneous">
    <text evidence="1">Present with 1890 molecules/cell in log phase SD medium.</text>
</comment>
<comment type="similarity">
    <text evidence="4">Belongs to the PXP2 family.</text>
</comment>
<feature type="chain" id="PRO_0000203112" description="Peroxisomal protein 2">
    <location>
        <begin position="1"/>
        <end position="283"/>
    </location>
</feature>
<feature type="short sequence motif" description="Peroxisomal target signal 1 (PTS1)" evidence="2">
    <location>
        <begin position="281"/>
        <end position="283"/>
    </location>
</feature>
<evidence type="ECO:0000269" key="1">
    <source>
    </source>
</evidence>
<evidence type="ECO:0000269" key="2">
    <source>
    </source>
</evidence>
<evidence type="ECO:0000303" key="3">
    <source>
    </source>
</evidence>
<evidence type="ECO:0000305" key="4"/>
<evidence type="ECO:0000305" key="5">
    <source>
    </source>
</evidence>
<proteinExistence type="evidence at protein level"/>
<reference key="1">
    <citation type="journal article" date="1996" name="EMBO J.">
        <title>Complete nucleotide sequence of Saccharomyces cerevisiae chromosome X.</title>
        <authorList>
            <person name="Galibert F."/>
            <person name="Alexandraki D."/>
            <person name="Baur A."/>
            <person name="Boles E."/>
            <person name="Chalwatzis N."/>
            <person name="Chuat J.-C."/>
            <person name="Coster F."/>
            <person name="Cziepluch C."/>
            <person name="de Haan M."/>
            <person name="Domdey H."/>
            <person name="Durand P."/>
            <person name="Entian K.-D."/>
            <person name="Gatius M."/>
            <person name="Goffeau A."/>
            <person name="Grivell L.A."/>
            <person name="Hennemann A."/>
            <person name="Herbert C.J."/>
            <person name="Heumann K."/>
            <person name="Hilger F."/>
            <person name="Hollenberg C.P."/>
            <person name="Huang M.-E."/>
            <person name="Jacq C."/>
            <person name="Jauniaux J.-C."/>
            <person name="Katsoulou C."/>
            <person name="Kirchrath L."/>
            <person name="Kleine K."/>
            <person name="Kordes E."/>
            <person name="Koetter P."/>
            <person name="Liebl S."/>
            <person name="Louis E.J."/>
            <person name="Manus V."/>
            <person name="Mewes H.-W."/>
            <person name="Miosga T."/>
            <person name="Obermaier B."/>
            <person name="Perea J."/>
            <person name="Pohl T.M."/>
            <person name="Portetelle D."/>
            <person name="Pujol A."/>
            <person name="Purnelle B."/>
            <person name="Ramezani Rad M."/>
            <person name="Rasmussen S.W."/>
            <person name="Rose M."/>
            <person name="Rossau R."/>
            <person name="Schaaff-Gerstenschlaeger I."/>
            <person name="Smits P.H.M."/>
            <person name="Scarcez T."/>
            <person name="Soriano N."/>
            <person name="To Van D."/>
            <person name="Tzermia M."/>
            <person name="Van Broekhoven A."/>
            <person name="Vandenbol M."/>
            <person name="Wedler H."/>
            <person name="von Wettstein D."/>
            <person name="Wambutt R."/>
            <person name="Zagulski M."/>
            <person name="Zollner A."/>
            <person name="Karpfinger-Hartl L."/>
        </authorList>
    </citation>
    <scope>NUCLEOTIDE SEQUENCE [LARGE SCALE GENOMIC DNA]</scope>
    <source>
        <strain>ATCC 204508 / S288c</strain>
    </source>
</reference>
<reference key="2">
    <citation type="journal article" date="2014" name="G3 (Bethesda)">
        <title>The reference genome sequence of Saccharomyces cerevisiae: Then and now.</title>
        <authorList>
            <person name="Engel S.R."/>
            <person name="Dietrich F.S."/>
            <person name="Fisk D.G."/>
            <person name="Binkley G."/>
            <person name="Balakrishnan R."/>
            <person name="Costanzo M.C."/>
            <person name="Dwight S.S."/>
            <person name="Hitz B.C."/>
            <person name="Karra K."/>
            <person name="Nash R.S."/>
            <person name="Weng S."/>
            <person name="Wong E.D."/>
            <person name="Lloyd P."/>
            <person name="Skrzypek M.S."/>
            <person name="Miyasato S.R."/>
            <person name="Simison M."/>
            <person name="Cherry J.M."/>
        </authorList>
    </citation>
    <scope>GENOME REANNOTATION</scope>
    <source>
        <strain>ATCC 204508 / S288c</strain>
    </source>
</reference>
<reference key="3">
    <citation type="journal article" date="2003" name="Nature">
        <title>Global analysis of protein expression in yeast.</title>
        <authorList>
            <person name="Ghaemmaghami S."/>
            <person name="Huh W.-K."/>
            <person name="Bower K."/>
            <person name="Howson R.W."/>
            <person name="Belle A."/>
            <person name="Dephoure N."/>
            <person name="O'Shea E.K."/>
            <person name="Weissman J.S."/>
        </authorList>
    </citation>
    <scope>LEVEL OF PROTEIN EXPRESSION [LARGE SCALE ANALYSIS]</scope>
</reference>
<reference key="4">
    <citation type="journal article" date="2012" name="Proc. Natl. Acad. Sci. U.S.A.">
        <title>N-terminal acetylome analyses and functional insights of the N-terminal acetyltransferase NatB.</title>
        <authorList>
            <person name="Van Damme P."/>
            <person name="Lasa M."/>
            <person name="Polevoda B."/>
            <person name="Gazquez C."/>
            <person name="Elosegui-Artola A."/>
            <person name="Kim D.S."/>
            <person name="De Juan-Pardo E."/>
            <person name="Demeyer K."/>
            <person name="Hole K."/>
            <person name="Larrea E."/>
            <person name="Timmerman E."/>
            <person name="Prieto J."/>
            <person name="Arnesen T."/>
            <person name="Sherman F."/>
            <person name="Gevaert K."/>
            <person name="Aldabe R."/>
        </authorList>
    </citation>
    <scope>IDENTIFICATION BY MASS SPECTROMETRY [LARGE SCALE ANALYSIS]</scope>
</reference>
<reference key="5">
    <citation type="journal article" date="2016" name="Traffic">
        <title>Identification of new fungal peroxisomal matrix proteins and revision of the PTS1 consensus.</title>
        <authorList>
            <person name="Noetzel C."/>
            <person name="Lingner T."/>
            <person name="Klingenberg H."/>
            <person name="Thoms S."/>
        </authorList>
    </citation>
    <scope>DOMAIN</scope>
    <scope>SUBCELLULAR LOCATION</scope>
    <scope>FUNCTION</scope>
    <scope>DISRUPTION PHENOTYPE</scope>
</reference>
<gene>
    <name evidence="3" type="primary">PXP2</name>
    <name type="ordered locus">YJR111C</name>
    <name type="ORF">J2009</name>
</gene>
<organism>
    <name type="scientific">Saccharomyces cerevisiae (strain ATCC 204508 / S288c)</name>
    <name type="common">Baker's yeast</name>
    <dbReference type="NCBI Taxonomy" id="559292"/>
    <lineage>
        <taxon>Eukaryota</taxon>
        <taxon>Fungi</taxon>
        <taxon>Dikarya</taxon>
        <taxon>Ascomycota</taxon>
        <taxon>Saccharomycotina</taxon>
        <taxon>Saccharomycetes</taxon>
        <taxon>Saccharomycetales</taxon>
        <taxon>Saccharomycetaceae</taxon>
        <taxon>Saccharomyces</taxon>
    </lineage>
</organism>
<accession>P47148</accession>
<accession>D6VWT0</accession>
<keyword id="KW-0963">Cytoplasm</keyword>
<keyword id="KW-0576">Peroxisome</keyword>
<keyword id="KW-1185">Reference proteome</keyword>
<dbReference type="EMBL" id="Z49611">
    <property type="protein sequence ID" value="CAA89641.1"/>
    <property type="molecule type" value="Genomic_DNA"/>
</dbReference>
<dbReference type="EMBL" id="BK006943">
    <property type="protein sequence ID" value="DAA08896.1"/>
    <property type="molecule type" value="Genomic_DNA"/>
</dbReference>
<dbReference type="PIR" id="S57134">
    <property type="entry name" value="S57134"/>
</dbReference>
<dbReference type="RefSeq" id="NP_012645.1">
    <property type="nucleotide sequence ID" value="NM_001181769.1"/>
</dbReference>
<dbReference type="SMR" id="P47148"/>
<dbReference type="BioGRID" id="33867">
    <property type="interactions" value="42"/>
</dbReference>
<dbReference type="FunCoup" id="P47148">
    <property type="interactions" value="25"/>
</dbReference>
<dbReference type="IntAct" id="P47148">
    <property type="interactions" value="4"/>
</dbReference>
<dbReference type="STRING" id="4932.YJR111C"/>
<dbReference type="iPTMnet" id="P47148"/>
<dbReference type="PaxDb" id="4932-YJR111C"/>
<dbReference type="PeptideAtlas" id="P47148"/>
<dbReference type="EnsemblFungi" id="YJR111C_mRNA">
    <property type="protein sequence ID" value="YJR111C"/>
    <property type="gene ID" value="YJR111C"/>
</dbReference>
<dbReference type="GeneID" id="853575"/>
<dbReference type="KEGG" id="sce:YJR111C"/>
<dbReference type="AGR" id="SGD:S000003872"/>
<dbReference type="SGD" id="S000003872">
    <property type="gene designation" value="PXP2"/>
</dbReference>
<dbReference type="VEuPathDB" id="FungiDB:YJR111C"/>
<dbReference type="eggNOG" id="ENOG502RCP9">
    <property type="taxonomic scope" value="Eukaryota"/>
</dbReference>
<dbReference type="HOGENOM" id="CLU_065389_3_0_1"/>
<dbReference type="InParanoid" id="P47148"/>
<dbReference type="OMA" id="WGHLKGA"/>
<dbReference type="OrthoDB" id="5537330at2759"/>
<dbReference type="BioCyc" id="YEAST:G3O-31734-MONOMER"/>
<dbReference type="BioGRID-ORCS" id="853575">
    <property type="hits" value="0 hits in 10 CRISPR screens"/>
</dbReference>
<dbReference type="PRO" id="PR:P47148"/>
<dbReference type="Proteomes" id="UP000002311">
    <property type="component" value="Chromosome X"/>
</dbReference>
<dbReference type="RNAct" id="P47148">
    <property type="molecule type" value="protein"/>
</dbReference>
<dbReference type="GO" id="GO:0005829">
    <property type="term" value="C:cytosol"/>
    <property type="evidence" value="ECO:0007669"/>
    <property type="project" value="UniProtKB-SubCell"/>
</dbReference>
<dbReference type="GO" id="GO:0005739">
    <property type="term" value="C:mitochondrion"/>
    <property type="evidence" value="ECO:0007005"/>
    <property type="project" value="SGD"/>
</dbReference>
<dbReference type="GO" id="GO:0005782">
    <property type="term" value="C:peroxisomal matrix"/>
    <property type="evidence" value="ECO:0007669"/>
    <property type="project" value="UniProtKB-SubCell"/>
</dbReference>
<dbReference type="GO" id="GO:0005777">
    <property type="term" value="C:peroxisome"/>
    <property type="evidence" value="ECO:0000314"/>
    <property type="project" value="SGD"/>
</dbReference>
<dbReference type="GO" id="GO:0051920">
    <property type="term" value="F:peroxiredoxin activity"/>
    <property type="evidence" value="ECO:0007669"/>
    <property type="project" value="InterPro"/>
</dbReference>
<dbReference type="FunFam" id="1.20.1290.10:FF:000007">
    <property type="entry name" value="YJR111C-like protein"/>
    <property type="match status" value="1"/>
</dbReference>
<dbReference type="Gene3D" id="1.20.1290.10">
    <property type="entry name" value="AhpD-like"/>
    <property type="match status" value="1"/>
</dbReference>
<dbReference type="InterPro" id="IPR029032">
    <property type="entry name" value="AhpD-like"/>
</dbReference>
<dbReference type="InterPro" id="IPR003779">
    <property type="entry name" value="CMD-like"/>
</dbReference>
<dbReference type="InterPro" id="IPR052999">
    <property type="entry name" value="PTS1_Protein"/>
</dbReference>
<dbReference type="PANTHER" id="PTHR28180">
    <property type="entry name" value="CONSERVED MITOCHONDRIAL PROTEIN-RELATED"/>
    <property type="match status" value="1"/>
</dbReference>
<dbReference type="PANTHER" id="PTHR28180:SF2">
    <property type="entry name" value="PEROXISOMAL PROTEIN 2"/>
    <property type="match status" value="1"/>
</dbReference>
<dbReference type="Pfam" id="PF02627">
    <property type="entry name" value="CMD"/>
    <property type="match status" value="1"/>
</dbReference>
<dbReference type="SUPFAM" id="SSF69118">
    <property type="entry name" value="AhpD-like"/>
    <property type="match status" value="1"/>
</dbReference>
<protein>
    <recommendedName>
        <fullName evidence="3">Peroxisomal protein 2</fullName>
    </recommendedName>
</protein>